<comment type="function">
    <text evidence="1">F(1)F(0) ATP synthase produces ATP from ADP in the presence of a proton or sodium gradient. F-type ATPases consist of two structural domains, F(1) containing the extramembraneous catalytic core and F(0) containing the membrane proton channel, linked together by a central stalk and a peripheral stalk. During catalysis, ATP synthesis in the catalytic domain of F(1) is coupled via a rotary mechanism of the central stalk subunits to proton translocation.</text>
</comment>
<comment type="function">
    <text evidence="1">Component of the F(0) channel, it forms part of the peripheral stalk, linking F(1) to F(0).</text>
</comment>
<comment type="subunit">
    <text evidence="1">F-type ATPases have 2 components, F(1) - the catalytic core - and F(0) - the membrane proton channel. F(1) has five subunits: alpha(3), beta(3), gamma(1), delta(1), epsilon(1). F(0) has three main subunits: a(1), b(2) and c(10-14). The alpha and beta chains form an alternating ring which encloses part of the gamma chain. F(1) is attached to F(0) by a central stalk formed by the gamma and epsilon chains, while a peripheral stalk is formed by the delta and b chains.</text>
</comment>
<comment type="subcellular location">
    <subcellularLocation>
        <location evidence="1">Cell inner membrane</location>
        <topology evidence="1">Single-pass membrane protein</topology>
    </subcellularLocation>
</comment>
<comment type="similarity">
    <text evidence="1">Belongs to the ATPase B chain family.</text>
</comment>
<sequence length="162" mass="17936">MEFLDATFFAFVGLVLFLALVVYLKVPGMMAKSLDDRADQIRNELAEAKRLREEAQHLLVEYQRKRKEAEAEAAHIVAAAEREAEMLTAEAMKKTEEFVANRTALSEQKIKQAEVEAMKAVRSAAVDLAIAAAETVLAKRADAKVQSELFGNAVGQVKTRLN</sequence>
<proteinExistence type="inferred from homology"/>
<name>ATPF1_RHIJ3</name>
<accession>Q1MKS9</accession>
<feature type="chain" id="PRO_0000368710" description="ATP synthase subunit b 1">
    <location>
        <begin position="1"/>
        <end position="162"/>
    </location>
</feature>
<feature type="transmembrane region" description="Helical" evidence="1">
    <location>
        <begin position="3"/>
        <end position="23"/>
    </location>
</feature>
<evidence type="ECO:0000255" key="1">
    <source>
        <dbReference type="HAMAP-Rule" id="MF_01398"/>
    </source>
</evidence>
<organism>
    <name type="scientific">Rhizobium johnstonii (strain DSM 114642 / LMG 32736 / 3841)</name>
    <name type="common">Rhizobium leguminosarum bv. viciae</name>
    <dbReference type="NCBI Taxonomy" id="216596"/>
    <lineage>
        <taxon>Bacteria</taxon>
        <taxon>Pseudomonadati</taxon>
        <taxon>Pseudomonadota</taxon>
        <taxon>Alphaproteobacteria</taxon>
        <taxon>Hyphomicrobiales</taxon>
        <taxon>Rhizobiaceae</taxon>
        <taxon>Rhizobium/Agrobacterium group</taxon>
        <taxon>Rhizobium</taxon>
        <taxon>Rhizobium johnstonii</taxon>
    </lineage>
</organism>
<gene>
    <name evidence="1" type="primary">atpF1</name>
    <name type="ordered locus">RL0928</name>
</gene>
<reference key="1">
    <citation type="journal article" date="2006" name="Genome Biol.">
        <title>The genome of Rhizobium leguminosarum has recognizable core and accessory components.</title>
        <authorList>
            <person name="Young J.P.W."/>
            <person name="Crossman L.C."/>
            <person name="Johnston A.W.B."/>
            <person name="Thomson N.R."/>
            <person name="Ghazoui Z.F."/>
            <person name="Hull K.H."/>
            <person name="Wexler M."/>
            <person name="Curson A.R.J."/>
            <person name="Todd J.D."/>
            <person name="Poole P.S."/>
            <person name="Mauchline T.H."/>
            <person name="East A.K."/>
            <person name="Quail M.A."/>
            <person name="Churcher C."/>
            <person name="Arrowsmith C."/>
            <person name="Cherevach I."/>
            <person name="Chillingworth T."/>
            <person name="Clarke K."/>
            <person name="Cronin A."/>
            <person name="Davis P."/>
            <person name="Fraser A."/>
            <person name="Hance Z."/>
            <person name="Hauser H."/>
            <person name="Jagels K."/>
            <person name="Moule S."/>
            <person name="Mungall K."/>
            <person name="Norbertczak H."/>
            <person name="Rabbinowitsch E."/>
            <person name="Sanders M."/>
            <person name="Simmonds M."/>
            <person name="Whitehead S."/>
            <person name="Parkhill J."/>
        </authorList>
    </citation>
    <scope>NUCLEOTIDE SEQUENCE [LARGE SCALE GENOMIC DNA]</scope>
    <source>
        <strain>DSM 114642 / LMG 32736 / 3841</strain>
    </source>
</reference>
<protein>
    <recommendedName>
        <fullName evidence="1">ATP synthase subunit b 1</fullName>
    </recommendedName>
    <alternativeName>
        <fullName evidence="1">ATP synthase F(0) sector subunit b 1</fullName>
    </alternativeName>
    <alternativeName>
        <fullName evidence="1">ATPase subunit I 1</fullName>
    </alternativeName>
    <alternativeName>
        <fullName evidence="1">F-type ATPase subunit b 1</fullName>
        <shortName evidence="1">F-ATPase subunit b 1</shortName>
    </alternativeName>
</protein>
<keyword id="KW-0066">ATP synthesis</keyword>
<keyword id="KW-0997">Cell inner membrane</keyword>
<keyword id="KW-1003">Cell membrane</keyword>
<keyword id="KW-0138">CF(0)</keyword>
<keyword id="KW-0375">Hydrogen ion transport</keyword>
<keyword id="KW-0406">Ion transport</keyword>
<keyword id="KW-0472">Membrane</keyword>
<keyword id="KW-0812">Transmembrane</keyword>
<keyword id="KW-1133">Transmembrane helix</keyword>
<keyword id="KW-0813">Transport</keyword>
<dbReference type="EMBL" id="AM236080">
    <property type="protein sequence ID" value="CAK06425.1"/>
    <property type="molecule type" value="Genomic_DNA"/>
</dbReference>
<dbReference type="RefSeq" id="WP_011650669.1">
    <property type="nucleotide sequence ID" value="NC_008380.1"/>
</dbReference>
<dbReference type="SMR" id="Q1MKS9"/>
<dbReference type="EnsemblBacteria" id="CAK06425">
    <property type="protein sequence ID" value="CAK06425"/>
    <property type="gene ID" value="RL0928"/>
</dbReference>
<dbReference type="KEGG" id="rle:RL0928"/>
<dbReference type="eggNOG" id="COG0711">
    <property type="taxonomic scope" value="Bacteria"/>
</dbReference>
<dbReference type="HOGENOM" id="CLU_079215_6_1_5"/>
<dbReference type="Proteomes" id="UP000006575">
    <property type="component" value="Chromosome"/>
</dbReference>
<dbReference type="GO" id="GO:0005886">
    <property type="term" value="C:plasma membrane"/>
    <property type="evidence" value="ECO:0007669"/>
    <property type="project" value="UniProtKB-SubCell"/>
</dbReference>
<dbReference type="GO" id="GO:0045259">
    <property type="term" value="C:proton-transporting ATP synthase complex"/>
    <property type="evidence" value="ECO:0007669"/>
    <property type="project" value="UniProtKB-KW"/>
</dbReference>
<dbReference type="GO" id="GO:0046933">
    <property type="term" value="F:proton-transporting ATP synthase activity, rotational mechanism"/>
    <property type="evidence" value="ECO:0007669"/>
    <property type="project" value="UniProtKB-UniRule"/>
</dbReference>
<dbReference type="GO" id="GO:0046961">
    <property type="term" value="F:proton-transporting ATPase activity, rotational mechanism"/>
    <property type="evidence" value="ECO:0007669"/>
    <property type="project" value="TreeGrafter"/>
</dbReference>
<dbReference type="CDD" id="cd06503">
    <property type="entry name" value="ATP-synt_Fo_b"/>
    <property type="match status" value="1"/>
</dbReference>
<dbReference type="HAMAP" id="MF_01398">
    <property type="entry name" value="ATP_synth_b_bprime"/>
    <property type="match status" value="1"/>
</dbReference>
<dbReference type="InterPro" id="IPR002146">
    <property type="entry name" value="ATP_synth_b/b'su_bac/chlpt"/>
</dbReference>
<dbReference type="InterPro" id="IPR050059">
    <property type="entry name" value="ATP_synthase_B_chain"/>
</dbReference>
<dbReference type="NCBIfam" id="NF006611">
    <property type="entry name" value="PRK09173.1"/>
    <property type="match status" value="1"/>
</dbReference>
<dbReference type="PANTHER" id="PTHR33445:SF1">
    <property type="entry name" value="ATP SYNTHASE SUBUNIT B"/>
    <property type="match status" value="1"/>
</dbReference>
<dbReference type="PANTHER" id="PTHR33445">
    <property type="entry name" value="ATP SYNTHASE SUBUNIT B', CHLOROPLASTIC"/>
    <property type="match status" value="1"/>
</dbReference>
<dbReference type="Pfam" id="PF00430">
    <property type="entry name" value="ATP-synt_B"/>
    <property type="match status" value="1"/>
</dbReference>